<comment type="function">
    <text evidence="1">Part of the high-affinity ATP-driven potassium transport (or Kdp) system, which catalyzes the hydrolysis of ATP coupled with the electrogenic transport of potassium into the cytoplasm. This subunit is responsible for energy coupling to the transport system and for the release of the potassium ions to the cytoplasm.</text>
</comment>
<comment type="catalytic activity">
    <reaction evidence="1">
        <text>K(+)(out) + ATP + H2O = K(+)(in) + ADP + phosphate + H(+)</text>
        <dbReference type="Rhea" id="RHEA:16777"/>
        <dbReference type="ChEBI" id="CHEBI:15377"/>
        <dbReference type="ChEBI" id="CHEBI:15378"/>
        <dbReference type="ChEBI" id="CHEBI:29103"/>
        <dbReference type="ChEBI" id="CHEBI:30616"/>
        <dbReference type="ChEBI" id="CHEBI:43474"/>
        <dbReference type="ChEBI" id="CHEBI:456216"/>
        <dbReference type="EC" id="7.2.2.6"/>
    </reaction>
    <physiologicalReaction direction="left-to-right" evidence="1">
        <dbReference type="Rhea" id="RHEA:16778"/>
    </physiologicalReaction>
</comment>
<comment type="subunit">
    <text evidence="1">The system is composed of three essential subunits: KdpA, KdpB and KdpC.</text>
</comment>
<comment type="subcellular location">
    <subcellularLocation>
        <location evidence="1">Cell inner membrane</location>
        <topology evidence="1">Multi-pass membrane protein</topology>
    </subcellularLocation>
</comment>
<comment type="similarity">
    <text evidence="1">Belongs to the cation transport ATPase (P-type) (TC 3.A.3) family. Type IA subfamily.</text>
</comment>
<feature type="chain" id="PRO_0000046146" description="Potassium-transporting ATPase ATP-binding subunit">
    <location>
        <begin position="1"/>
        <end position="690"/>
    </location>
</feature>
<feature type="transmembrane region" description="Helical" evidence="1">
    <location>
        <begin position="44"/>
        <end position="64"/>
    </location>
</feature>
<feature type="transmembrane region" description="Helical" evidence="1">
    <location>
        <begin position="78"/>
        <end position="98"/>
    </location>
</feature>
<feature type="transmembrane region" description="Helical" evidence="1">
    <location>
        <begin position="233"/>
        <end position="253"/>
    </location>
</feature>
<feature type="transmembrane region" description="Helical" evidence="1">
    <location>
        <begin position="268"/>
        <end position="288"/>
    </location>
</feature>
<feature type="transmembrane region" description="Helical" evidence="1">
    <location>
        <begin position="601"/>
        <end position="621"/>
    </location>
</feature>
<feature type="transmembrane region" description="Helical" evidence="1">
    <location>
        <begin position="627"/>
        <end position="647"/>
    </location>
</feature>
<feature type="transmembrane region" description="Helical" evidence="1">
    <location>
        <begin position="665"/>
        <end position="685"/>
    </location>
</feature>
<feature type="region of interest" description="Disordered" evidence="2">
    <location>
        <begin position="1"/>
        <end position="23"/>
    </location>
</feature>
<feature type="active site" description="4-aspartylphosphate intermediate" evidence="1">
    <location>
        <position position="321"/>
    </location>
</feature>
<feature type="binding site" evidence="1">
    <location>
        <position position="358"/>
    </location>
    <ligand>
        <name>ATP</name>
        <dbReference type="ChEBI" id="CHEBI:30616"/>
    </ligand>
</feature>
<feature type="binding site" evidence="1">
    <location>
        <position position="362"/>
    </location>
    <ligand>
        <name>ATP</name>
        <dbReference type="ChEBI" id="CHEBI:30616"/>
    </ligand>
</feature>
<feature type="binding site" evidence="1">
    <location>
        <begin position="389"/>
        <end position="396"/>
    </location>
    <ligand>
        <name>ATP</name>
        <dbReference type="ChEBI" id="CHEBI:30616"/>
    </ligand>
</feature>
<feature type="binding site" evidence="1">
    <location>
        <position position="408"/>
    </location>
    <ligand>
        <name>ATP</name>
        <dbReference type="ChEBI" id="CHEBI:30616"/>
    </ligand>
</feature>
<feature type="binding site" evidence="1">
    <location>
        <position position="531"/>
    </location>
    <ligand>
        <name>Mg(2+)</name>
        <dbReference type="ChEBI" id="CHEBI:18420"/>
    </ligand>
</feature>
<feature type="binding site" evidence="1">
    <location>
        <position position="535"/>
    </location>
    <ligand>
        <name>Mg(2+)</name>
        <dbReference type="ChEBI" id="CHEBI:18420"/>
    </ligand>
</feature>
<gene>
    <name evidence="1" type="primary">kdpB</name>
    <name type="ordered locus">slr1729</name>
</gene>
<protein>
    <recommendedName>
        <fullName evidence="1">Potassium-transporting ATPase ATP-binding subunit</fullName>
        <ecNumber evidence="1">7.2.2.6</ecNumber>
    </recommendedName>
    <alternativeName>
        <fullName evidence="1">ATP phosphohydrolase [potassium-transporting] B chain</fullName>
    </alternativeName>
    <alternativeName>
        <fullName evidence="1">Potassium-binding and translocating subunit B</fullName>
    </alternativeName>
    <alternativeName>
        <fullName evidence="1">Potassium-translocating ATPase B chain</fullName>
    </alternativeName>
</protein>
<dbReference type="EC" id="7.2.2.6" evidence="1"/>
<dbReference type="EMBL" id="BA000022">
    <property type="protein sequence ID" value="BAA17929.1"/>
    <property type="molecule type" value="Genomic_DNA"/>
</dbReference>
<dbReference type="PIR" id="S75067">
    <property type="entry name" value="S75067"/>
</dbReference>
<dbReference type="SMR" id="P73867"/>
<dbReference type="IntAct" id="P73867">
    <property type="interactions" value="6"/>
</dbReference>
<dbReference type="STRING" id="1148.gene:10498798"/>
<dbReference type="PaxDb" id="1148-1653012"/>
<dbReference type="EnsemblBacteria" id="BAA17929">
    <property type="protein sequence ID" value="BAA17929"/>
    <property type="gene ID" value="BAA17929"/>
</dbReference>
<dbReference type="KEGG" id="syn:slr1729"/>
<dbReference type="eggNOG" id="COG2216">
    <property type="taxonomic scope" value="Bacteria"/>
</dbReference>
<dbReference type="InParanoid" id="P73867"/>
<dbReference type="PhylomeDB" id="P73867"/>
<dbReference type="Proteomes" id="UP000001425">
    <property type="component" value="Chromosome"/>
</dbReference>
<dbReference type="GO" id="GO:0005886">
    <property type="term" value="C:plasma membrane"/>
    <property type="evidence" value="ECO:0000318"/>
    <property type="project" value="GO_Central"/>
</dbReference>
<dbReference type="GO" id="GO:0031004">
    <property type="term" value="C:potassium ion-transporting ATPase complex"/>
    <property type="evidence" value="ECO:0000318"/>
    <property type="project" value="GO_Central"/>
</dbReference>
<dbReference type="GO" id="GO:1903103">
    <property type="term" value="C:potassium:proton antiporter complex"/>
    <property type="evidence" value="ECO:0000318"/>
    <property type="project" value="GO_Central"/>
</dbReference>
<dbReference type="GO" id="GO:0005524">
    <property type="term" value="F:ATP binding"/>
    <property type="evidence" value="ECO:0007669"/>
    <property type="project" value="UniProtKB-UniRule"/>
</dbReference>
<dbReference type="GO" id="GO:0016887">
    <property type="term" value="F:ATP hydrolysis activity"/>
    <property type="evidence" value="ECO:0007669"/>
    <property type="project" value="InterPro"/>
</dbReference>
<dbReference type="GO" id="GO:0000287">
    <property type="term" value="F:magnesium ion binding"/>
    <property type="evidence" value="ECO:0007669"/>
    <property type="project" value="UniProtKB-UniRule"/>
</dbReference>
<dbReference type="GO" id="GO:0008556">
    <property type="term" value="F:P-type potassium transmembrane transporter activity"/>
    <property type="evidence" value="ECO:0000318"/>
    <property type="project" value="GO_Central"/>
</dbReference>
<dbReference type="GO" id="GO:0071805">
    <property type="term" value="P:potassium ion transmembrane transport"/>
    <property type="evidence" value="ECO:0000318"/>
    <property type="project" value="GO_Central"/>
</dbReference>
<dbReference type="CDD" id="cd02078">
    <property type="entry name" value="P-type_ATPase_K"/>
    <property type="match status" value="1"/>
</dbReference>
<dbReference type="FunFam" id="2.70.150.10:FF:000033">
    <property type="entry name" value="Potassium-transporting ATPase ATP-binding subunit"/>
    <property type="match status" value="1"/>
</dbReference>
<dbReference type="Gene3D" id="3.40.1110.10">
    <property type="entry name" value="Calcium-transporting ATPase, cytoplasmic domain N"/>
    <property type="match status" value="1"/>
</dbReference>
<dbReference type="Gene3D" id="2.70.150.10">
    <property type="entry name" value="Calcium-transporting ATPase, cytoplasmic transduction domain A"/>
    <property type="match status" value="1"/>
</dbReference>
<dbReference type="Gene3D" id="3.40.50.1000">
    <property type="entry name" value="HAD superfamily/HAD-like"/>
    <property type="match status" value="1"/>
</dbReference>
<dbReference type="HAMAP" id="MF_00285">
    <property type="entry name" value="KdpB"/>
    <property type="match status" value="1"/>
</dbReference>
<dbReference type="InterPro" id="IPR023299">
    <property type="entry name" value="ATPase_P-typ_cyto_dom_N"/>
</dbReference>
<dbReference type="InterPro" id="IPR018303">
    <property type="entry name" value="ATPase_P-typ_P_site"/>
</dbReference>
<dbReference type="InterPro" id="IPR023298">
    <property type="entry name" value="ATPase_P-typ_TM_dom_sf"/>
</dbReference>
<dbReference type="InterPro" id="IPR008250">
    <property type="entry name" value="ATPase_P-typ_transduc_dom_A_sf"/>
</dbReference>
<dbReference type="InterPro" id="IPR036412">
    <property type="entry name" value="HAD-like_sf"/>
</dbReference>
<dbReference type="InterPro" id="IPR023214">
    <property type="entry name" value="HAD_sf"/>
</dbReference>
<dbReference type="InterPro" id="IPR006391">
    <property type="entry name" value="P-type_ATPase_bsu_IA"/>
</dbReference>
<dbReference type="InterPro" id="IPR001757">
    <property type="entry name" value="P_typ_ATPase"/>
</dbReference>
<dbReference type="InterPro" id="IPR044492">
    <property type="entry name" value="P_typ_ATPase_HD_dom"/>
</dbReference>
<dbReference type="NCBIfam" id="TIGR01494">
    <property type="entry name" value="ATPase_P-type"/>
    <property type="match status" value="2"/>
</dbReference>
<dbReference type="NCBIfam" id="TIGR01497">
    <property type="entry name" value="kdpB"/>
    <property type="match status" value="1"/>
</dbReference>
<dbReference type="PANTHER" id="PTHR43743">
    <property type="entry name" value="POTASSIUM-TRANSPORTING ATPASE ATP-BINDING SUBUNIT"/>
    <property type="match status" value="1"/>
</dbReference>
<dbReference type="PANTHER" id="PTHR43743:SF1">
    <property type="entry name" value="POTASSIUM-TRANSPORTING ATPASE ATP-BINDING SUBUNIT"/>
    <property type="match status" value="1"/>
</dbReference>
<dbReference type="Pfam" id="PF00122">
    <property type="entry name" value="E1-E2_ATPase"/>
    <property type="match status" value="1"/>
</dbReference>
<dbReference type="Pfam" id="PF00702">
    <property type="entry name" value="Hydrolase"/>
    <property type="match status" value="1"/>
</dbReference>
<dbReference type="PRINTS" id="PR00119">
    <property type="entry name" value="CATATPASE"/>
</dbReference>
<dbReference type="SFLD" id="SFLDS00003">
    <property type="entry name" value="Haloacid_Dehalogenase"/>
    <property type="match status" value="1"/>
</dbReference>
<dbReference type="SFLD" id="SFLDF00027">
    <property type="entry name" value="p-type_atpase"/>
    <property type="match status" value="1"/>
</dbReference>
<dbReference type="SUPFAM" id="SSF81653">
    <property type="entry name" value="Calcium ATPase, transduction domain A"/>
    <property type="match status" value="1"/>
</dbReference>
<dbReference type="SUPFAM" id="SSF81665">
    <property type="entry name" value="Calcium ATPase, transmembrane domain M"/>
    <property type="match status" value="1"/>
</dbReference>
<dbReference type="SUPFAM" id="SSF56784">
    <property type="entry name" value="HAD-like"/>
    <property type="match status" value="1"/>
</dbReference>
<dbReference type="PROSITE" id="PS00154">
    <property type="entry name" value="ATPASE_E1_E2"/>
    <property type="match status" value="1"/>
</dbReference>
<accession>P73867</accession>
<evidence type="ECO:0000255" key="1">
    <source>
        <dbReference type="HAMAP-Rule" id="MF_00285"/>
    </source>
</evidence>
<evidence type="ECO:0000256" key="2">
    <source>
        <dbReference type="SAM" id="MobiDB-lite"/>
    </source>
</evidence>
<keyword id="KW-0067">ATP-binding</keyword>
<keyword id="KW-0997">Cell inner membrane</keyword>
<keyword id="KW-1003">Cell membrane</keyword>
<keyword id="KW-0406">Ion transport</keyword>
<keyword id="KW-0460">Magnesium</keyword>
<keyword id="KW-0472">Membrane</keyword>
<keyword id="KW-0479">Metal-binding</keyword>
<keyword id="KW-0547">Nucleotide-binding</keyword>
<keyword id="KW-0597">Phosphoprotein</keyword>
<keyword id="KW-0630">Potassium</keyword>
<keyword id="KW-0633">Potassium transport</keyword>
<keyword id="KW-1185">Reference proteome</keyword>
<keyword id="KW-1278">Translocase</keyword>
<keyword id="KW-0812">Transmembrane</keyword>
<keyword id="KW-1133">Transmembrane helix</keyword>
<keyword id="KW-0813">Transport</keyword>
<proteinExistence type="inferred from homology"/>
<name>KDPB_SYNY3</name>
<reference key="1">
    <citation type="journal article" date="1996" name="DNA Res.">
        <title>Sequence analysis of the genome of the unicellular cyanobacterium Synechocystis sp. strain PCC6803. II. Sequence determination of the entire genome and assignment of potential protein-coding regions.</title>
        <authorList>
            <person name="Kaneko T."/>
            <person name="Sato S."/>
            <person name="Kotani H."/>
            <person name="Tanaka A."/>
            <person name="Asamizu E."/>
            <person name="Nakamura Y."/>
            <person name="Miyajima N."/>
            <person name="Hirosawa M."/>
            <person name="Sugiura M."/>
            <person name="Sasamoto S."/>
            <person name="Kimura T."/>
            <person name="Hosouchi T."/>
            <person name="Matsuno A."/>
            <person name="Muraki A."/>
            <person name="Nakazaki N."/>
            <person name="Naruo K."/>
            <person name="Okumura S."/>
            <person name="Shimpo S."/>
            <person name="Takeuchi C."/>
            <person name="Wada T."/>
            <person name="Watanabe A."/>
            <person name="Yamada M."/>
            <person name="Yasuda M."/>
            <person name="Tabata S."/>
        </authorList>
    </citation>
    <scope>NUCLEOTIDE SEQUENCE [LARGE SCALE GENOMIC DNA]</scope>
    <source>
        <strain>ATCC 27184 / PCC 6803 / Kazusa</strain>
    </source>
</reference>
<sequence>MNSTSTVRQPGGPRQQRRHTPKANLSDLYQRAFKEAWVKLNPKIMVKNPVMFMVWVGTLITGMLTLNPNLFGVTGTSAMFNGLVTVILLFTVLFANFAEAVAEGRGKAQADALRSTQTQTYAQRILADGSLEMVSSTHLRKGDRIVVSVGDIIPADGEVLEGVASVDESAITGESAPVLKEPGSDVASSVTGGTRIISDELIIRVTADPGKGFIDRMIDLVEGAERSKTPNEIALTVLLAVLTLVFLIVVATLPPPANYIDSPVSITLLIALLVALIPTTIGGLLSAIGIAGMDRVAQFNVVATSGRAVEACGDINTLVLDKTGTITLGNRLAETFLPVNGHSLKEVAAIALAASIFDTTPEGKSIVRLAEKMGATLDFDRQQAEGVEFSARTRMSGTDLPDGSEVRKGAVDAIRGFVRSRGGKSPTGLDEAYGKVSHLGGTPLAVCRNDEIYGVIYLKDIIKPGIQERFNQLRRMGVRTVMLTGDNRITASVIAKEAGVDDFIAEATPEDKIQVIQQEQAAGKLVAMTGDGTNDAPALAQANVGLAMNSGTQAAKEAANMVDLDSDPTKLIDLVTIGKQLLITRGALTTFSLANDIAKYFAIIPAMFAGIGIGALNIMDLKSPQSAVLSALIYNALIIPALIPLALRGVKFRPLSADQLLQRNILVYGLGGIIVPFVAIKLIDLGISLL</sequence>
<organism>
    <name type="scientific">Synechocystis sp. (strain ATCC 27184 / PCC 6803 / Kazusa)</name>
    <dbReference type="NCBI Taxonomy" id="1111708"/>
    <lineage>
        <taxon>Bacteria</taxon>
        <taxon>Bacillati</taxon>
        <taxon>Cyanobacteriota</taxon>
        <taxon>Cyanophyceae</taxon>
        <taxon>Synechococcales</taxon>
        <taxon>Merismopediaceae</taxon>
        <taxon>Synechocystis</taxon>
    </lineage>
</organism>